<name>Y5847_STRAW</name>
<gene>
    <name type="ordered locus">SAV_5847</name>
</gene>
<comment type="function">
    <text evidence="1">Probably part of an ABC transporter complex. Responsible for energy coupling to the transport system (By similarity).</text>
</comment>
<comment type="subcellular location">
    <subcellularLocation>
        <location evidence="1">Cell membrane</location>
        <topology evidence="1">Peripheral membrane protein</topology>
    </subcellularLocation>
</comment>
<comment type="similarity">
    <text evidence="4">Belongs to the ABC transporter superfamily.</text>
</comment>
<proteinExistence type="inferred from homology"/>
<dbReference type="EC" id="7.-.-.-"/>
<dbReference type="EMBL" id="BA000030">
    <property type="protein sequence ID" value="BAC73559.1"/>
    <property type="molecule type" value="Genomic_DNA"/>
</dbReference>
<dbReference type="RefSeq" id="WP_010987249.1">
    <property type="nucleotide sequence ID" value="NZ_BAVY01000014.1"/>
</dbReference>
<dbReference type="SMR" id="Q82B58"/>
<dbReference type="GeneID" id="41542928"/>
<dbReference type="KEGG" id="sma:SAVERM_5847"/>
<dbReference type="eggNOG" id="COG3845">
    <property type="taxonomic scope" value="Bacteria"/>
</dbReference>
<dbReference type="HOGENOM" id="CLU_000604_86_7_11"/>
<dbReference type="OrthoDB" id="501320at2"/>
<dbReference type="Proteomes" id="UP000000428">
    <property type="component" value="Chromosome"/>
</dbReference>
<dbReference type="GO" id="GO:0043190">
    <property type="term" value="C:ATP-binding cassette (ABC) transporter complex"/>
    <property type="evidence" value="ECO:0007669"/>
    <property type="project" value="TreeGrafter"/>
</dbReference>
<dbReference type="GO" id="GO:0005524">
    <property type="term" value="F:ATP binding"/>
    <property type="evidence" value="ECO:0007669"/>
    <property type="project" value="UniProtKB-KW"/>
</dbReference>
<dbReference type="GO" id="GO:0016887">
    <property type="term" value="F:ATP hydrolysis activity"/>
    <property type="evidence" value="ECO:0007669"/>
    <property type="project" value="InterPro"/>
</dbReference>
<dbReference type="GO" id="GO:0042626">
    <property type="term" value="F:ATPase-coupled transmembrane transporter activity"/>
    <property type="evidence" value="ECO:0007669"/>
    <property type="project" value="TreeGrafter"/>
</dbReference>
<dbReference type="CDD" id="cd03225">
    <property type="entry name" value="ABC_cobalt_CbiO_domain1"/>
    <property type="match status" value="1"/>
</dbReference>
<dbReference type="FunFam" id="3.40.50.300:FF:000760">
    <property type="entry name" value="Cobalt ABC transporter ATP-binding protein"/>
    <property type="match status" value="1"/>
</dbReference>
<dbReference type="Gene3D" id="3.40.50.300">
    <property type="entry name" value="P-loop containing nucleotide triphosphate hydrolases"/>
    <property type="match status" value="2"/>
</dbReference>
<dbReference type="InterPro" id="IPR003593">
    <property type="entry name" value="AAA+_ATPase"/>
</dbReference>
<dbReference type="InterPro" id="IPR003439">
    <property type="entry name" value="ABC_transporter-like_ATP-bd"/>
</dbReference>
<dbReference type="InterPro" id="IPR017871">
    <property type="entry name" value="ABC_transporter-like_CS"/>
</dbReference>
<dbReference type="InterPro" id="IPR015856">
    <property type="entry name" value="ABC_transpr_CbiO/EcfA_su"/>
</dbReference>
<dbReference type="InterPro" id="IPR050095">
    <property type="entry name" value="ECF_ABC_transporter_ATP-bd"/>
</dbReference>
<dbReference type="InterPro" id="IPR027417">
    <property type="entry name" value="P-loop_NTPase"/>
</dbReference>
<dbReference type="PANTHER" id="PTHR43553:SF27">
    <property type="entry name" value="ENERGY-COUPLING FACTOR TRANSPORTER ATP-BINDING PROTEIN ECFA2"/>
    <property type="match status" value="1"/>
</dbReference>
<dbReference type="PANTHER" id="PTHR43553">
    <property type="entry name" value="HEAVY METAL TRANSPORTER"/>
    <property type="match status" value="1"/>
</dbReference>
<dbReference type="Pfam" id="PF00005">
    <property type="entry name" value="ABC_tran"/>
    <property type="match status" value="2"/>
</dbReference>
<dbReference type="SMART" id="SM00382">
    <property type="entry name" value="AAA"/>
    <property type="match status" value="2"/>
</dbReference>
<dbReference type="SUPFAM" id="SSF52540">
    <property type="entry name" value="P-loop containing nucleoside triphosphate hydrolases"/>
    <property type="match status" value="2"/>
</dbReference>
<dbReference type="PROSITE" id="PS00211">
    <property type="entry name" value="ABC_TRANSPORTER_1"/>
    <property type="match status" value="1"/>
</dbReference>
<dbReference type="PROSITE" id="PS50893">
    <property type="entry name" value="ABC_TRANSPORTER_2"/>
    <property type="match status" value="2"/>
</dbReference>
<sequence>MIRFEDVSVTYDGAAEPTVRGVDFTVPEGELVLLVGPSGVGKSTVLGAVSGLVPHFTGGTLRGRVTVAGRDTRTHKPRELADVVGTVGQDPLSHFVTDTVEDELAYGMESLGIAPDVMRRRVEETLDLLGLAELRDRPISTLSGGQQQRVAIGSVLTPHPKVLVLDEPTSALDPAAAEEVLAVLQRLVHDLGTTVLMAEHRLERVVQYADRVALLPAPGAPLTLGTPPEVMAASPVYPPVVDLGRLAGWSPLPLTVRDARRRAGALRERLAATETPTPTATATATAAPAPSPSRPRRPRLLRKRAPVPSAALPVAAVEALAVRRGRVEALRRVDLTASPGEIIALMGRNGAGKSTLLGALVGLVPPAGGSVRVGGAVPHRTAPRDLVRRVGLVPQEPRDLLYADTVAAECVAADGDAGAEPGTCRALVSELLPGVADGTHPRDLSEGQRLALALAVVLTARPPLLLLDEPTRGLDYAAKGRLVTLLRALAADGHAIVLATHDVELAAELAHRVVILAAGEVVADGPTAEVVVASPSFAPQVTKILAPQHWLTVTQVREALA</sequence>
<evidence type="ECO:0000250" key="1"/>
<evidence type="ECO:0000255" key="2">
    <source>
        <dbReference type="PROSITE-ProRule" id="PRU00434"/>
    </source>
</evidence>
<evidence type="ECO:0000256" key="3">
    <source>
        <dbReference type="SAM" id="MobiDB-lite"/>
    </source>
</evidence>
<evidence type="ECO:0000305" key="4"/>
<feature type="chain" id="PRO_0000092091" description="Putative ABC transporter ATP-binding protein SAV_5847">
    <location>
        <begin position="1"/>
        <end position="561"/>
    </location>
</feature>
<feature type="domain" description="ABC transporter 1" evidence="2">
    <location>
        <begin position="2"/>
        <end position="243"/>
    </location>
</feature>
<feature type="domain" description="ABC transporter 2" evidence="2">
    <location>
        <begin position="315"/>
        <end position="543"/>
    </location>
</feature>
<feature type="region of interest" description="Disordered" evidence="3">
    <location>
        <begin position="268"/>
        <end position="299"/>
    </location>
</feature>
<feature type="compositionally biased region" description="Low complexity" evidence="3">
    <location>
        <begin position="272"/>
        <end position="288"/>
    </location>
</feature>
<feature type="binding site" evidence="2">
    <location>
        <begin position="36"/>
        <end position="43"/>
    </location>
    <ligand>
        <name>ATP</name>
        <dbReference type="ChEBI" id="CHEBI:30616"/>
        <label>1</label>
    </ligand>
</feature>
<feature type="binding site" evidence="2">
    <location>
        <begin position="347"/>
        <end position="354"/>
    </location>
    <ligand>
        <name>ATP</name>
        <dbReference type="ChEBI" id="CHEBI:30616"/>
        <label>2</label>
    </ligand>
</feature>
<reference key="1">
    <citation type="journal article" date="2001" name="Proc. Natl. Acad. Sci. U.S.A.">
        <title>Genome sequence of an industrial microorganism Streptomyces avermitilis: deducing the ability of producing secondary metabolites.</title>
        <authorList>
            <person name="Omura S."/>
            <person name="Ikeda H."/>
            <person name="Ishikawa J."/>
            <person name="Hanamoto A."/>
            <person name="Takahashi C."/>
            <person name="Shinose M."/>
            <person name="Takahashi Y."/>
            <person name="Horikawa H."/>
            <person name="Nakazawa H."/>
            <person name="Osonoe T."/>
            <person name="Kikuchi H."/>
            <person name="Shiba T."/>
            <person name="Sakaki Y."/>
            <person name="Hattori M."/>
        </authorList>
    </citation>
    <scope>NUCLEOTIDE SEQUENCE [LARGE SCALE GENOMIC DNA]</scope>
    <source>
        <strain>ATCC 31267 / DSM 46492 / JCM 5070 / NBRC 14893 / NCIMB 12804 / NRRL 8165 / MA-4680</strain>
    </source>
</reference>
<reference key="2">
    <citation type="journal article" date="2003" name="Nat. Biotechnol.">
        <title>Complete genome sequence and comparative analysis of the industrial microorganism Streptomyces avermitilis.</title>
        <authorList>
            <person name="Ikeda H."/>
            <person name="Ishikawa J."/>
            <person name="Hanamoto A."/>
            <person name="Shinose M."/>
            <person name="Kikuchi H."/>
            <person name="Shiba T."/>
            <person name="Sakaki Y."/>
            <person name="Hattori M."/>
            <person name="Omura S."/>
        </authorList>
    </citation>
    <scope>NUCLEOTIDE SEQUENCE [LARGE SCALE GENOMIC DNA]</scope>
    <source>
        <strain>ATCC 31267 / DSM 46492 / JCM 5070 / NBRC 14893 / NCIMB 12804 / NRRL 8165 / MA-4680</strain>
    </source>
</reference>
<protein>
    <recommendedName>
        <fullName>Putative ABC transporter ATP-binding protein SAV_5847</fullName>
        <ecNumber>7.-.-.-</ecNumber>
    </recommendedName>
</protein>
<keyword id="KW-0067">ATP-binding</keyword>
<keyword id="KW-1003">Cell membrane</keyword>
<keyword id="KW-0472">Membrane</keyword>
<keyword id="KW-0547">Nucleotide-binding</keyword>
<keyword id="KW-1185">Reference proteome</keyword>
<keyword id="KW-0677">Repeat</keyword>
<keyword id="KW-1278">Translocase</keyword>
<keyword id="KW-0813">Transport</keyword>
<organism>
    <name type="scientific">Streptomyces avermitilis (strain ATCC 31267 / DSM 46492 / JCM 5070 / NBRC 14893 / NCIMB 12804 / NRRL 8165 / MA-4680)</name>
    <dbReference type="NCBI Taxonomy" id="227882"/>
    <lineage>
        <taxon>Bacteria</taxon>
        <taxon>Bacillati</taxon>
        <taxon>Actinomycetota</taxon>
        <taxon>Actinomycetes</taxon>
        <taxon>Kitasatosporales</taxon>
        <taxon>Streptomycetaceae</taxon>
        <taxon>Streptomyces</taxon>
    </lineage>
</organism>
<accession>Q82B58</accession>